<evidence type="ECO:0000250" key="1">
    <source>
        <dbReference type="UniProtKB" id="Q9UT76"/>
    </source>
</evidence>
<evidence type="ECO:0000269" key="2">
    <source>
    </source>
</evidence>
<evidence type="ECO:0000269" key="3">
    <source>
    </source>
</evidence>
<evidence type="ECO:0000269" key="4">
    <source>
    </source>
</evidence>
<evidence type="ECO:0000269" key="5">
    <source>
    </source>
</evidence>
<evidence type="ECO:0000269" key="6">
    <source>
    </source>
</evidence>
<evidence type="ECO:0000269" key="7">
    <source>
    </source>
</evidence>
<evidence type="ECO:0000269" key="8">
    <source>
    </source>
</evidence>
<evidence type="ECO:0000269" key="9">
    <source>
    </source>
</evidence>
<evidence type="ECO:0000269" key="10">
    <source>
    </source>
</evidence>
<evidence type="ECO:0000269" key="11">
    <source>
    </source>
</evidence>
<evidence type="ECO:0000305" key="12"/>
<evidence type="ECO:0007744" key="13">
    <source>
        <dbReference type="PDB" id="6K71"/>
    </source>
</evidence>
<evidence type="ECO:0007744" key="14">
    <source>
        <dbReference type="PDB" id="6K72"/>
    </source>
</evidence>
<evidence type="ECO:0007829" key="15">
    <source>
        <dbReference type="PDB" id="6CAJ"/>
    </source>
</evidence>
<evidence type="ECO:0007829" key="16">
    <source>
        <dbReference type="PDB" id="7L70"/>
    </source>
</evidence>
<evidence type="ECO:0007829" key="17">
    <source>
        <dbReference type="PDB" id="7RLO"/>
    </source>
</evidence>
<evidence type="ECO:0007829" key="18">
    <source>
        <dbReference type="PDB" id="7VLK"/>
    </source>
</evidence>
<keyword id="KW-0002">3D-structure</keyword>
<keyword id="KW-0963">Cytoplasm</keyword>
<keyword id="KW-0225">Disease variant</keyword>
<keyword id="KW-0396">Initiation factor</keyword>
<keyword id="KW-1026">Leukodystrophy</keyword>
<keyword id="KW-0648">Protein biosynthesis</keyword>
<keyword id="KW-1267">Proteomics identification</keyword>
<keyword id="KW-1185">Reference proteome</keyword>
<accession>P49770</accession>
<accession>O43201</accession>
<feature type="chain" id="PRO_0000156061" description="Translation initiation factor eIF2B subunit beta">
    <location>
        <begin position="1"/>
        <end position="351"/>
    </location>
</feature>
<feature type="sequence variant" id="VAR_068451" description="In VWM2; dbSNP:rs397514648." evidence="5">
    <original>V</original>
    <variation>E</variation>
    <location>
        <position position="85"/>
    </location>
</feature>
<feature type="sequence variant" id="VAR_079034" description="Found in a patient with Rett syndrome-like phenotype; uncertain significance; dbSNP:rs150617429." evidence="9">
    <original>A</original>
    <variation>V</variation>
    <location>
        <position position="127"/>
    </location>
</feature>
<feature type="sequence variant" id="VAR_016842" description="In VWM2; with ovarian failure; dbSNP:rs104894428." evidence="3 4">
    <original>S</original>
    <variation>F</variation>
    <location>
        <position position="171"/>
    </location>
</feature>
<feature type="sequence variant" id="VAR_068452" description="In VWM2; dbSNP:rs113994011." evidence="4">
    <original>P</original>
    <variation>S</variation>
    <location>
        <position position="196"/>
    </location>
</feature>
<feature type="sequence variant" id="VAR_068453" description="In VWM2; dbSNP:rs113994012." evidence="4">
    <original>G</original>
    <variation>V</variation>
    <location>
        <position position="200"/>
    </location>
</feature>
<feature type="sequence variant" id="VAR_012289" description="In VWM2; with and without ovarian failure; dbSNP:rs104894425." evidence="2 3 4 7">
    <original>E</original>
    <variation>G</variation>
    <location>
        <position position="213"/>
    </location>
</feature>
<feature type="sequence variant" id="VAR_068454" description="In VWM2; dbSNP:rs1889630768." evidence="6">
    <original>C</original>
    <variation>Y</variation>
    <location>
        <position position="268"/>
    </location>
</feature>
<feature type="sequence variant" id="VAR_012321" description="In VWM2; dbSNP:rs113994016." evidence="2">
    <original>K</original>
    <variation>R</variation>
    <location>
        <position position="273"/>
    </location>
</feature>
<feature type="sequence variant" id="VAR_012290" description="In VWM2; dbSNP:rs104894426." evidence="2">
    <original>V</original>
    <variation>D</variation>
    <location>
        <position position="316"/>
    </location>
</feature>
<feature type="sequence variant" id="VAR_012322" description="In VWM2; dbSNP:rs113994020." evidence="2">
    <original>G</original>
    <variation>V</variation>
    <location>
        <position position="329"/>
    </location>
</feature>
<feature type="sequence conflict" description="In Ref. 2; AAC42002." evidence="12" ref="2">
    <original>A</original>
    <variation>K</variation>
    <location>
        <position position="6"/>
    </location>
</feature>
<feature type="sequence conflict" description="In Ref. 2; AAC42002." evidence="12" ref="2">
    <original>K</original>
    <variation>T</variation>
    <location>
        <position position="23"/>
    </location>
</feature>
<feature type="sequence conflict" description="In Ref. 2; AAC42002." evidence="12" ref="2">
    <original>S</original>
    <variation>R</variation>
    <location>
        <position position="30"/>
    </location>
</feature>
<feature type="sequence conflict" description="In Ref. 2; AAC42002." evidence="12" ref="2">
    <original>A</original>
    <variation>V</variation>
    <location>
        <position position="35"/>
    </location>
</feature>
<feature type="sequence conflict" description="In Ref. 2; AAC42002." evidence="12" ref="2">
    <original>S</original>
    <variation>R</variation>
    <location>
        <position position="52"/>
    </location>
</feature>
<feature type="sequence conflict" description="In Ref. 2; AAC42002." evidence="12" ref="2">
    <original>RLHGRSD</original>
    <variation>DSMDAAT</variation>
    <location>
        <begin position="95"/>
        <end position="101"/>
    </location>
</feature>
<feature type="sequence conflict" description="In Ref. 2; AAC42002." evidence="12" ref="2">
    <original>H</original>
    <variation>D</variation>
    <location>
        <position position="110"/>
    </location>
</feature>
<feature type="helix" evidence="18">
    <location>
        <begin position="9"/>
        <end position="24"/>
    </location>
</feature>
<feature type="strand" evidence="17">
    <location>
        <begin position="28"/>
        <end position="30"/>
    </location>
</feature>
<feature type="helix" evidence="18">
    <location>
        <begin position="31"/>
        <end position="48"/>
    </location>
</feature>
<feature type="helix" evidence="18">
    <location>
        <begin position="54"/>
        <end position="71"/>
    </location>
</feature>
<feature type="helix" evidence="18">
    <location>
        <begin position="76"/>
        <end position="97"/>
    </location>
</feature>
<feature type="helix" evidence="18">
    <location>
        <begin position="109"/>
        <end position="114"/>
    </location>
</feature>
<feature type="helix" evidence="18">
    <location>
        <begin position="129"/>
        <end position="145"/>
    </location>
</feature>
<feature type="helix" evidence="18">
    <location>
        <begin position="147"/>
        <end position="152"/>
    </location>
</feature>
<feature type="turn" evidence="18">
    <location>
        <begin position="156"/>
        <end position="158"/>
    </location>
</feature>
<feature type="strand" evidence="18">
    <location>
        <begin position="164"/>
        <end position="169"/>
    </location>
</feature>
<feature type="helix" evidence="18">
    <location>
        <begin position="172"/>
        <end position="181"/>
    </location>
</feature>
<feature type="turn" evidence="18">
    <location>
        <begin position="182"/>
        <end position="184"/>
    </location>
</feature>
<feature type="strand" evidence="18">
    <location>
        <begin position="188"/>
        <end position="193"/>
    </location>
</feature>
<feature type="strand" evidence="18">
    <location>
        <begin position="195"/>
        <end position="197"/>
    </location>
</feature>
<feature type="helix" evidence="18">
    <location>
        <begin position="200"/>
        <end position="209"/>
    </location>
</feature>
<feature type="strand" evidence="18">
    <location>
        <begin position="213"/>
        <end position="218"/>
    </location>
</feature>
<feature type="helix" evidence="18">
    <location>
        <begin position="219"/>
        <end position="221"/>
    </location>
</feature>
<feature type="helix" evidence="18">
    <location>
        <begin position="222"/>
        <end position="225"/>
    </location>
</feature>
<feature type="helix" evidence="18">
    <location>
        <begin position="226"/>
        <end position="228"/>
    </location>
</feature>
<feature type="strand" evidence="18">
    <location>
        <begin position="230"/>
        <end position="234"/>
    </location>
</feature>
<feature type="strand" evidence="18">
    <location>
        <begin position="237"/>
        <end position="239"/>
    </location>
</feature>
<feature type="strand" evidence="16">
    <location>
        <begin position="241"/>
        <end position="243"/>
    </location>
</feature>
<feature type="strand" evidence="18">
    <location>
        <begin position="245"/>
        <end position="248"/>
    </location>
</feature>
<feature type="helix" evidence="18">
    <location>
        <begin position="251"/>
        <end position="260"/>
    </location>
</feature>
<feature type="strand" evidence="18">
    <location>
        <begin position="265"/>
        <end position="268"/>
    </location>
</feature>
<feature type="helix" evidence="18">
    <location>
        <begin position="271"/>
        <end position="273"/>
    </location>
</feature>
<feature type="turn" evidence="15">
    <location>
        <begin position="279"/>
        <end position="281"/>
    </location>
</feature>
<feature type="strand" evidence="18">
    <location>
        <begin position="283"/>
        <end position="286"/>
    </location>
</feature>
<feature type="helix" evidence="18">
    <location>
        <begin position="291"/>
        <end position="293"/>
    </location>
</feature>
<feature type="helix" evidence="18">
    <location>
        <begin position="297"/>
        <end position="299"/>
    </location>
</feature>
<feature type="helix" evidence="18">
    <location>
        <begin position="301"/>
        <end position="304"/>
    </location>
</feature>
<feature type="strand" evidence="18">
    <location>
        <begin position="305"/>
        <end position="308"/>
    </location>
</feature>
<feature type="strand" evidence="18">
    <location>
        <begin position="313"/>
        <end position="316"/>
    </location>
</feature>
<feature type="helix" evidence="18">
    <location>
        <begin position="318"/>
        <end position="320"/>
    </location>
</feature>
<feature type="strand" evidence="18">
    <location>
        <begin position="323"/>
        <end position="326"/>
    </location>
</feature>
<feature type="strand" evidence="18">
    <location>
        <begin position="329"/>
        <end position="331"/>
    </location>
</feature>
<feature type="helix" evidence="18">
    <location>
        <begin position="333"/>
        <end position="335"/>
    </location>
</feature>
<feature type="helix" evidence="18">
    <location>
        <begin position="336"/>
        <end position="343"/>
    </location>
</feature>
<feature type="helix" evidence="18">
    <location>
        <begin position="346"/>
        <end position="348"/>
    </location>
</feature>
<reference key="1">
    <citation type="submission" date="1997-11" db="EMBL/GenBank/DDBJ databases">
        <authorList>
            <person name="Yu W."/>
            <person name="Sarginson J."/>
            <person name="Gibbs R.A."/>
        </authorList>
    </citation>
    <scope>NUCLEOTIDE SEQUENCE [LARGE SCALE MRNA]</scope>
    <source>
        <tissue>Brain</tissue>
    </source>
</reference>
<reference key="2">
    <citation type="journal article" date="1995" name="Nature">
        <title>Cloning of a gene bearing missense mutations in early-onset familial Alzheimer's disease.</title>
        <authorList>
            <person name="Sherrington R."/>
            <person name="Rogaev E.I."/>
            <person name="Liang Y."/>
            <person name="Rogaeva E.A."/>
            <person name="Levesque G."/>
            <person name="Ikeda M."/>
            <person name="Chi H."/>
            <person name="Lin C."/>
            <person name="Li G."/>
            <person name="Holman K."/>
            <person name="Tsuda T."/>
            <person name="Mar L."/>
            <person name="Foncin J.-F."/>
            <person name="Bruni A.C."/>
            <person name="Montesi M.P."/>
            <person name="Sorbi S."/>
            <person name="Rainero I."/>
            <person name="Pinessi L."/>
            <person name="Nee L."/>
            <person name="Chumakov I."/>
            <person name="Pollen D."/>
            <person name="Brookes A."/>
            <person name="Sanseau P."/>
            <person name="Polinsky R.J."/>
            <person name="Wasco W."/>
            <person name="da Silva H.A.R."/>
            <person name="Haines J.L."/>
            <person name="Pericak-Vance M.A."/>
            <person name="Tanzi R.E."/>
            <person name="Roses A.D."/>
            <person name="Fraser P.E."/>
            <person name="Rommens J.M."/>
            <person name="St George-Hyslop P.H."/>
        </authorList>
    </citation>
    <scope>NUCLEOTIDE SEQUENCE [MRNA]</scope>
    <source>
        <tissue>Brain</tissue>
    </source>
</reference>
<reference key="3">
    <citation type="journal article" date="2003" name="Nature">
        <title>The DNA sequence and analysis of human chromosome 14.</title>
        <authorList>
            <person name="Heilig R."/>
            <person name="Eckenberg R."/>
            <person name="Petit J.-L."/>
            <person name="Fonknechten N."/>
            <person name="Da Silva C."/>
            <person name="Cattolico L."/>
            <person name="Levy M."/>
            <person name="Barbe V."/>
            <person name="De Berardinis V."/>
            <person name="Ureta-Vidal A."/>
            <person name="Pelletier E."/>
            <person name="Vico V."/>
            <person name="Anthouard V."/>
            <person name="Rowen L."/>
            <person name="Madan A."/>
            <person name="Qin S."/>
            <person name="Sun H."/>
            <person name="Du H."/>
            <person name="Pepin K."/>
            <person name="Artiguenave F."/>
            <person name="Robert C."/>
            <person name="Cruaud C."/>
            <person name="Bruels T."/>
            <person name="Jaillon O."/>
            <person name="Friedlander L."/>
            <person name="Samson G."/>
            <person name="Brottier P."/>
            <person name="Cure S."/>
            <person name="Segurens B."/>
            <person name="Aniere F."/>
            <person name="Samain S."/>
            <person name="Crespeau H."/>
            <person name="Abbasi N."/>
            <person name="Aiach N."/>
            <person name="Boscus D."/>
            <person name="Dickhoff R."/>
            <person name="Dors M."/>
            <person name="Dubois I."/>
            <person name="Friedman C."/>
            <person name="Gouyvenoux M."/>
            <person name="James R."/>
            <person name="Madan A."/>
            <person name="Mairey-Estrada B."/>
            <person name="Mangenot S."/>
            <person name="Martins N."/>
            <person name="Menard M."/>
            <person name="Oztas S."/>
            <person name="Ratcliffe A."/>
            <person name="Shaffer T."/>
            <person name="Trask B."/>
            <person name="Vacherie B."/>
            <person name="Bellemere C."/>
            <person name="Belser C."/>
            <person name="Besnard-Gonnet M."/>
            <person name="Bartol-Mavel D."/>
            <person name="Boutard M."/>
            <person name="Briez-Silla S."/>
            <person name="Combette S."/>
            <person name="Dufosse-Laurent V."/>
            <person name="Ferron C."/>
            <person name="Lechaplais C."/>
            <person name="Louesse C."/>
            <person name="Muselet D."/>
            <person name="Magdelenat G."/>
            <person name="Pateau E."/>
            <person name="Petit E."/>
            <person name="Sirvain-Trukniewicz P."/>
            <person name="Trybou A."/>
            <person name="Vega-Czarny N."/>
            <person name="Bataille E."/>
            <person name="Bluet E."/>
            <person name="Bordelais I."/>
            <person name="Dubois M."/>
            <person name="Dumont C."/>
            <person name="Guerin T."/>
            <person name="Haffray S."/>
            <person name="Hammadi R."/>
            <person name="Muanga J."/>
            <person name="Pellouin V."/>
            <person name="Robert D."/>
            <person name="Wunderle E."/>
            <person name="Gauguet G."/>
            <person name="Roy A."/>
            <person name="Sainte-Marthe L."/>
            <person name="Verdier J."/>
            <person name="Verdier-Discala C."/>
            <person name="Hillier L.W."/>
            <person name="Fulton L."/>
            <person name="McPherson J."/>
            <person name="Matsuda F."/>
            <person name="Wilson R."/>
            <person name="Scarpelli C."/>
            <person name="Gyapay G."/>
            <person name="Wincker P."/>
            <person name="Saurin W."/>
            <person name="Quetier F."/>
            <person name="Waterston R."/>
            <person name="Hood L."/>
            <person name="Weissenbach J."/>
        </authorList>
    </citation>
    <scope>NUCLEOTIDE SEQUENCE [LARGE SCALE GENOMIC DNA]</scope>
</reference>
<reference key="4">
    <citation type="journal article" date="2004" name="Genome Res.">
        <title>The status, quality, and expansion of the NIH full-length cDNA project: the Mammalian Gene Collection (MGC).</title>
        <authorList>
            <consortium name="The MGC Project Team"/>
        </authorList>
    </citation>
    <scope>NUCLEOTIDE SEQUENCE [LARGE SCALE MRNA]</scope>
    <source>
        <tissue>Lung</tissue>
    </source>
</reference>
<reference key="5">
    <citation type="journal article" date="2011" name="BMC Syst. Biol.">
        <title>Initial characterization of the human central proteome.</title>
        <authorList>
            <person name="Burkard T.R."/>
            <person name="Planyavsky M."/>
            <person name="Kaupe I."/>
            <person name="Breitwieser F.P."/>
            <person name="Buerckstuemmer T."/>
            <person name="Bennett K.L."/>
            <person name="Superti-Furga G."/>
            <person name="Colinge J."/>
        </authorList>
    </citation>
    <scope>IDENTIFICATION BY MASS SPECTROMETRY [LARGE SCALE ANALYSIS]</scope>
</reference>
<reference key="6">
    <citation type="journal article" date="2012" name="Proc. Natl. Acad. Sci. U.S.A.">
        <title>N-terminal acetylome analyses and functional insights of the N-terminal acetyltransferase NatB.</title>
        <authorList>
            <person name="Van Damme P."/>
            <person name="Lasa M."/>
            <person name="Polevoda B."/>
            <person name="Gazquez C."/>
            <person name="Elosegui-Artola A."/>
            <person name="Kim D.S."/>
            <person name="De Juan-Pardo E."/>
            <person name="Demeyer K."/>
            <person name="Hole K."/>
            <person name="Larrea E."/>
            <person name="Timmerman E."/>
            <person name="Prieto J."/>
            <person name="Arnesen T."/>
            <person name="Sherman F."/>
            <person name="Gevaert K."/>
            <person name="Aldabe R."/>
        </authorList>
    </citation>
    <scope>IDENTIFICATION BY MASS SPECTROMETRY [LARGE SCALE ANALYSIS]</scope>
</reference>
<reference key="7">
    <citation type="journal article" date="2015" name="Science">
        <title>Stress responses. Mutations in a translation initiation factor identify the target of a memory-enhancing compound.</title>
        <authorList>
            <person name="Sekine Y."/>
            <person name="Zyryanova A."/>
            <person name="Crespillo-Casado A."/>
            <person name="Fischer P.M."/>
            <person name="Harding H.P."/>
            <person name="Ron D."/>
        </authorList>
    </citation>
    <scope>FUNCTION</scope>
    <scope>ACTIVITY REGULATION</scope>
    <scope>IDENTIFICATION BY MASS SPECTROMETRY</scope>
    <scope>IDENTIFICATION IN THE EIF2B COMPLEX</scope>
</reference>
<reference key="8">
    <citation type="journal article" date="2016" name="J. Struct. Funct. Genomics">
        <title>Expression, purification, and crystallization of Schizosaccharomyces pombe eIF2B.</title>
        <authorList>
            <person name="Kashiwagi K."/>
            <person name="Shigeta T."/>
            <person name="Imataka H."/>
            <person name="Ito T."/>
            <person name="Yokoyama S."/>
        </authorList>
    </citation>
    <scope>FUNCTION</scope>
    <scope>IDENTIFICATION IN THE EIF2B COMPLEX</scope>
</reference>
<reference evidence="13 14" key="9">
    <citation type="journal article" date="2019" name="Science">
        <title>Structural basis for eIF2B inhibition in integrated stress response.</title>
        <authorList>
            <person name="Kashiwagi K."/>
            <person name="Yokoyama T."/>
            <person name="Nishimoto M."/>
            <person name="Takahashi M."/>
            <person name="Sakamoto A."/>
            <person name="Yonemochi M."/>
            <person name="Shirouzu M."/>
            <person name="Ito T."/>
        </authorList>
    </citation>
    <scope>STRUCTURE BY ELECTRON MICROSCOPY (4.30 ANGSTROMS) IN COMPLEX WITH THE EIF2 COMPLEX</scope>
    <scope>FUNCTION</scope>
    <scope>SUBUNIT</scope>
    <scope>IDENTIFICATION IN THE EIF2B COMPLEX</scope>
</reference>
<reference key="10">
    <citation type="journal article" date="2001" name="Nat. Genet.">
        <title>Subunits of the translation initiation factor eIF2B are mutant in leukoencephalopathy with vanishing white matter.</title>
        <authorList>
            <person name="Leegwater P.A.J."/>
            <person name="Vermeulen G."/>
            <person name="Koenst A.A.M."/>
            <person name="Naidu S."/>
            <person name="Mulders J."/>
            <person name="Visser A."/>
            <person name="Kersbergen P."/>
            <person name="Mobach D."/>
            <person name="Fonds D."/>
            <person name="van Berkel C.G.M."/>
            <person name="Lemmers R.J.L.F."/>
            <person name="Frants R.R."/>
            <person name="Oudejans C.B.M."/>
            <person name="Schutgens R.B.H."/>
            <person name="Pronk J.C."/>
            <person name="van der Knaap M.S."/>
        </authorList>
    </citation>
    <scope>VARIANTS VWM2 GLY-213; ARG-273; ASP-316 AND VAL-329</scope>
</reference>
<reference key="11">
    <citation type="journal article" date="2003" name="Am. J. Hum. Genet.">
        <title>Ovarian failure related to eukaryotic initiation factor 2B mutations.</title>
        <authorList>
            <person name="Fogli A."/>
            <person name="Rodriguez D."/>
            <person name="Eymard-Pierre E."/>
            <person name="Bouhour F."/>
            <person name="Labauge P."/>
            <person name="Meaney B.F."/>
            <person name="Zeesman S."/>
            <person name="Kaneski C.R."/>
            <person name="Schiffmann R."/>
            <person name="Boespflug-Tanguy O."/>
        </authorList>
    </citation>
    <scope>VARIANTS VWM2 PHE-171 AND GLY-213</scope>
</reference>
<reference key="12">
    <citation type="journal article" date="2005" name="Hum. Mutat.">
        <title>Identification of ten novel mutations in patients with eIF2B-related disorders.</title>
        <authorList>
            <person name="Ohlenbusch A."/>
            <person name="Henneke M."/>
            <person name="Brockmann K."/>
            <person name="Goerg M."/>
            <person name="Hanefeld F."/>
            <person name="Kohlschutter A."/>
            <person name="Gartner J."/>
        </authorList>
    </citation>
    <scope>VARIANTS VWM2 PHE-171; SER-196; VAL-200 AND GLY-213</scope>
</reference>
<reference key="13">
    <citation type="journal article" date="2011" name="Neurogenetics">
        <title>Adult-onset leukoencephalopathies with vanishing white matter with novel missense mutations in EIF2B2, EIF2B3, and EIF2B5.</title>
        <authorList>
            <person name="Matsukawa T."/>
            <person name="Wang X."/>
            <person name="Liu R."/>
            <person name="Wortham N.C."/>
            <person name="Onuki Y."/>
            <person name="Kubota A."/>
            <person name="Hida A."/>
            <person name="Kowa H."/>
            <person name="Fukuda Y."/>
            <person name="Ishiura H."/>
            <person name="Mitsui J."/>
            <person name="Takahashi Y."/>
            <person name="Aoki S."/>
            <person name="Takizawa S."/>
            <person name="Shimizu J."/>
            <person name="Goto J."/>
            <person name="Proud C.G."/>
            <person name="Tsuji S."/>
        </authorList>
    </citation>
    <scope>VARIANT VWM2 GLU-85</scope>
</reference>
<reference key="14">
    <citation type="journal article" date="2012" name="Gene">
        <title>Vanishing white matter disease caused by EIF2B2 mutation with the presentation of an adrenoleukodystrophy phenotype.</title>
        <authorList>
            <person name="Alsalem A."/>
            <person name="Shaheen R."/>
            <person name="Alkuraya F.S."/>
        </authorList>
    </citation>
    <scope>VARIANT VWM2 TYR-268</scope>
</reference>
<reference key="15">
    <citation type="journal article" date="2013" name="Neurol. Sci.">
        <title>Vanishing white matter disease: an Italian case with A638G mutation in exon 5 of EIF2B2 gene, an unusual early onset and a long course.</title>
        <authorList>
            <person name="Sambati L."/>
            <person name="Agati R."/>
            <person name="Bacci A."/>
            <person name="Bianchi S."/>
            <person name="Capellari S."/>
        </authorList>
    </citation>
    <scope>VARIANT VWM2 GLY-213</scope>
</reference>
<reference key="16">
    <citation type="journal article" date="2016" name="J. Med. Genet.">
        <title>Identification of novel genetic causes of Rett syndrome-like phenotypes.</title>
        <authorList>
            <person name="Lopes F."/>
            <person name="Barbosa M."/>
            <person name="Ameur A."/>
            <person name="Soares G."/>
            <person name="de Sa J."/>
            <person name="Dias A.I."/>
            <person name="Oliveira G."/>
            <person name="Cabral P."/>
            <person name="Temudo T."/>
            <person name="Calado E."/>
            <person name="Cruz I.F."/>
            <person name="Vieira J.P."/>
            <person name="Oliveira R."/>
            <person name="Esteves S."/>
            <person name="Sauer S."/>
            <person name="Jonasson I."/>
            <person name="Syvaenen A.C."/>
            <person name="Gyllensten U."/>
            <person name="Pinto D."/>
            <person name="Maciel P."/>
        </authorList>
    </citation>
    <scope>VARIANT VAL-127</scope>
</reference>
<protein>
    <recommendedName>
        <fullName>Translation initiation factor eIF2B subunit beta</fullName>
    </recommendedName>
    <alternativeName>
        <fullName>S20I15</fullName>
    </alternativeName>
    <alternativeName>
        <fullName>S20III15</fullName>
    </alternativeName>
    <alternativeName>
        <fullName>eIF2B GDP-GTP exchange factor subunit beta</fullName>
    </alternativeName>
</protein>
<gene>
    <name type="primary">EIF2B2</name>
    <name type="synonym">EIF2BB</name>
</gene>
<dbReference type="EMBL" id="AF035280">
    <property type="protein sequence ID" value="AAB88176.1"/>
    <property type="molecule type" value="mRNA"/>
</dbReference>
<dbReference type="EMBL" id="L40395">
    <property type="protein sequence ID" value="AAC42002.1"/>
    <property type="status" value="ALT_FRAME"/>
    <property type="molecule type" value="mRNA"/>
</dbReference>
<dbReference type="EMBL" id="AC006530">
    <property type="protein sequence ID" value="AAD30183.1"/>
    <property type="molecule type" value="Genomic_DNA"/>
</dbReference>
<dbReference type="EMBL" id="BC011750">
    <property type="protein sequence ID" value="AAH11750.1"/>
    <property type="molecule type" value="mRNA"/>
</dbReference>
<dbReference type="CCDS" id="CCDS9836.1"/>
<dbReference type="RefSeq" id="NP_055054.1">
    <property type="nucleotide sequence ID" value="NM_014239.4"/>
</dbReference>
<dbReference type="PDB" id="6CAJ">
    <property type="method" value="EM"/>
    <property type="resolution" value="2.80 A"/>
    <property type="chains" value="C/D=2-351"/>
</dbReference>
<dbReference type="PDB" id="6EZO">
    <property type="method" value="EM"/>
    <property type="resolution" value="4.10 A"/>
    <property type="chains" value="C/D=5-351"/>
</dbReference>
<dbReference type="PDB" id="6K71">
    <property type="method" value="EM"/>
    <property type="resolution" value="4.30 A"/>
    <property type="chains" value="C/D=1-351"/>
</dbReference>
<dbReference type="PDB" id="6K72">
    <property type="method" value="EM"/>
    <property type="resolution" value="4.60 A"/>
    <property type="chains" value="C/D=1-351"/>
</dbReference>
<dbReference type="PDB" id="6O81">
    <property type="method" value="EM"/>
    <property type="resolution" value="3.21 A"/>
    <property type="chains" value="C/D=2-351"/>
</dbReference>
<dbReference type="PDB" id="6O85">
    <property type="method" value="EM"/>
    <property type="resolution" value="3.03 A"/>
    <property type="chains" value="C/D=2-351"/>
</dbReference>
<dbReference type="PDB" id="6O9Z">
    <property type="method" value="EM"/>
    <property type="resolution" value="3.03 A"/>
    <property type="chains" value="C/D=2-351"/>
</dbReference>
<dbReference type="PDB" id="7D43">
    <property type="method" value="EM"/>
    <property type="resolution" value="4.30 A"/>
    <property type="chains" value="C/D=1-351"/>
</dbReference>
<dbReference type="PDB" id="7D44">
    <property type="method" value="EM"/>
    <property type="resolution" value="4.00 A"/>
    <property type="chains" value="C/D=1-351"/>
</dbReference>
<dbReference type="PDB" id="7D45">
    <property type="method" value="EM"/>
    <property type="resolution" value="3.80 A"/>
    <property type="chains" value="C/D=1-351"/>
</dbReference>
<dbReference type="PDB" id="7D46">
    <property type="method" value="EM"/>
    <property type="resolution" value="4.00 A"/>
    <property type="chains" value="C/D=1-351"/>
</dbReference>
<dbReference type="PDB" id="7F64">
    <property type="method" value="EM"/>
    <property type="resolution" value="2.42 A"/>
    <property type="chains" value="C/D=1-351"/>
</dbReference>
<dbReference type="PDB" id="7F66">
    <property type="method" value="EM"/>
    <property type="resolution" value="2.76 A"/>
    <property type="chains" value="C/D=1-351"/>
</dbReference>
<dbReference type="PDB" id="7F67">
    <property type="method" value="EM"/>
    <property type="resolution" value="3.59 A"/>
    <property type="chains" value="C/D=1-351"/>
</dbReference>
<dbReference type="PDB" id="7KMF">
    <property type="method" value="EM"/>
    <property type="resolution" value="2.91 A"/>
    <property type="chains" value="C/D=1-351"/>
</dbReference>
<dbReference type="PDB" id="7L70">
    <property type="method" value="EM"/>
    <property type="resolution" value="2.80 A"/>
    <property type="chains" value="C/D=2-351"/>
</dbReference>
<dbReference type="PDB" id="7L7G">
    <property type="method" value="EM"/>
    <property type="resolution" value="3.00 A"/>
    <property type="chains" value="C/D=2-351"/>
</dbReference>
<dbReference type="PDB" id="7RLO">
    <property type="method" value="EM"/>
    <property type="resolution" value="2.60 A"/>
    <property type="chains" value="C/D=1-351"/>
</dbReference>
<dbReference type="PDB" id="7TRJ">
    <property type="method" value="EM"/>
    <property type="resolution" value="2.80 A"/>
    <property type="chains" value="C/D=1-351"/>
</dbReference>
<dbReference type="PDB" id="7VLK">
    <property type="method" value="EM"/>
    <property type="resolution" value="2.27 A"/>
    <property type="chains" value="C/D=1-351"/>
</dbReference>
<dbReference type="PDB" id="8TQO">
    <property type="method" value="EM"/>
    <property type="resolution" value="3.10 A"/>
    <property type="chains" value="D=2-351"/>
</dbReference>
<dbReference type="PDB" id="8TQZ">
    <property type="method" value="EM"/>
    <property type="resolution" value="2.90 A"/>
    <property type="chains" value="C/D=2-351"/>
</dbReference>
<dbReference type="PDBsum" id="6CAJ"/>
<dbReference type="PDBsum" id="6EZO"/>
<dbReference type="PDBsum" id="6K71"/>
<dbReference type="PDBsum" id="6K72"/>
<dbReference type="PDBsum" id="6O81"/>
<dbReference type="PDBsum" id="6O85"/>
<dbReference type="PDBsum" id="6O9Z"/>
<dbReference type="PDBsum" id="7D43"/>
<dbReference type="PDBsum" id="7D44"/>
<dbReference type="PDBsum" id="7D45"/>
<dbReference type="PDBsum" id="7D46"/>
<dbReference type="PDBsum" id="7F64"/>
<dbReference type="PDBsum" id="7F66"/>
<dbReference type="PDBsum" id="7F67"/>
<dbReference type="PDBsum" id="7KMF"/>
<dbReference type="PDBsum" id="7L70"/>
<dbReference type="PDBsum" id="7L7G"/>
<dbReference type="PDBsum" id="7RLO"/>
<dbReference type="PDBsum" id="7TRJ"/>
<dbReference type="PDBsum" id="7VLK"/>
<dbReference type="PDBsum" id="8TQO"/>
<dbReference type="PDBsum" id="8TQZ"/>
<dbReference type="EMDB" id="EMD-0649"/>
<dbReference type="EMDB" id="EMD-0651"/>
<dbReference type="EMDB" id="EMD-0664"/>
<dbReference type="EMDB" id="EMD-22924"/>
<dbReference type="EMDB" id="EMD-23209"/>
<dbReference type="EMDB" id="EMD-24535"/>
<dbReference type="EMDB" id="EMD-26098"/>
<dbReference type="EMDB" id="EMD-30568"/>
<dbReference type="EMDB" id="EMD-30569"/>
<dbReference type="EMDB" id="EMD-30570"/>
<dbReference type="EMDB" id="EMD-30571"/>
<dbReference type="EMDB" id="EMD-31472"/>
<dbReference type="EMDB" id="EMD-31474"/>
<dbReference type="EMDB" id="EMD-31475"/>
<dbReference type="EMDB" id="EMD-32023"/>
<dbReference type="EMDB" id="EMD-41510"/>
<dbReference type="EMDB" id="EMD-41566"/>
<dbReference type="EMDB" id="EMD-4162"/>
<dbReference type="EMDB" id="EMD-7442"/>
<dbReference type="EMDB" id="EMD-9840"/>
<dbReference type="EMDB" id="EMD-9841"/>
<dbReference type="EMDB" id="EMD-9842"/>
<dbReference type="SMR" id="P49770"/>
<dbReference type="BioGRID" id="114409">
    <property type="interactions" value="142"/>
</dbReference>
<dbReference type="ComplexPortal" id="CPX-8343">
    <property type="entry name" value="Eukaryotic translation initiation factor 2B complex"/>
</dbReference>
<dbReference type="CORUM" id="P49770"/>
<dbReference type="FunCoup" id="P49770">
    <property type="interactions" value="2208"/>
</dbReference>
<dbReference type="IntAct" id="P49770">
    <property type="interactions" value="83"/>
</dbReference>
<dbReference type="MINT" id="P49770"/>
<dbReference type="STRING" id="9606.ENSP00000266126"/>
<dbReference type="DrugBank" id="DB05992">
    <property type="generic name" value="Plinabulin"/>
</dbReference>
<dbReference type="iPTMnet" id="P49770"/>
<dbReference type="PhosphoSitePlus" id="P49770"/>
<dbReference type="SwissPalm" id="P49770"/>
<dbReference type="BioMuta" id="EIF2B2"/>
<dbReference type="DMDM" id="6226858"/>
<dbReference type="jPOST" id="P49770"/>
<dbReference type="MassIVE" id="P49770"/>
<dbReference type="PaxDb" id="9606-ENSP00000266126"/>
<dbReference type="PeptideAtlas" id="P49770"/>
<dbReference type="ProteomicsDB" id="56113"/>
<dbReference type="Pumba" id="P49770"/>
<dbReference type="Antibodypedia" id="57">
    <property type="antibodies" value="182 antibodies from 30 providers"/>
</dbReference>
<dbReference type="DNASU" id="8892"/>
<dbReference type="Ensembl" id="ENST00000266126.10">
    <property type="protein sequence ID" value="ENSP00000266126.5"/>
    <property type="gene ID" value="ENSG00000119718.11"/>
</dbReference>
<dbReference type="GeneID" id="8892"/>
<dbReference type="KEGG" id="hsa:8892"/>
<dbReference type="MANE-Select" id="ENST00000266126.10">
    <property type="protein sequence ID" value="ENSP00000266126.5"/>
    <property type="RefSeq nucleotide sequence ID" value="NM_014239.4"/>
    <property type="RefSeq protein sequence ID" value="NP_055054.1"/>
</dbReference>
<dbReference type="AGR" id="HGNC:3258"/>
<dbReference type="CTD" id="8892"/>
<dbReference type="DisGeNET" id="8892"/>
<dbReference type="GeneCards" id="EIF2B2"/>
<dbReference type="GeneReviews" id="EIF2B2"/>
<dbReference type="HGNC" id="HGNC:3258">
    <property type="gene designation" value="EIF2B2"/>
</dbReference>
<dbReference type="HPA" id="ENSG00000119718">
    <property type="expression patterns" value="Low tissue specificity"/>
</dbReference>
<dbReference type="MalaCards" id="EIF2B2"/>
<dbReference type="MIM" id="606454">
    <property type="type" value="gene"/>
</dbReference>
<dbReference type="MIM" id="620312">
    <property type="type" value="phenotype"/>
</dbReference>
<dbReference type="neXtProt" id="NX_P49770"/>
<dbReference type="OpenTargets" id="ENSG00000119718"/>
<dbReference type="Orphanet" id="157713">
    <property type="disease" value="Congenital or early infantile CACH syndrome"/>
</dbReference>
<dbReference type="Orphanet" id="99854">
    <property type="disease" value="Cree leukoencephalopathy"/>
</dbReference>
<dbReference type="Orphanet" id="157719">
    <property type="disease" value="Juvenile or adult CACH syndrome"/>
</dbReference>
<dbReference type="Orphanet" id="157716">
    <property type="disease" value="Late infantile CACH syndrome"/>
</dbReference>
<dbReference type="Orphanet" id="99853">
    <property type="disease" value="Ovarioleukodystrophy"/>
</dbReference>
<dbReference type="PharmGKB" id="PA27689"/>
<dbReference type="VEuPathDB" id="HostDB:ENSG00000119718"/>
<dbReference type="eggNOG" id="KOG1465">
    <property type="taxonomic scope" value="Eukaryota"/>
</dbReference>
<dbReference type="GeneTree" id="ENSGT00550000074908"/>
<dbReference type="HOGENOM" id="CLU_016218_4_3_1"/>
<dbReference type="InParanoid" id="P49770"/>
<dbReference type="OMA" id="SHSCAVA"/>
<dbReference type="OrthoDB" id="269919at2759"/>
<dbReference type="PAN-GO" id="P49770">
    <property type="GO annotations" value="3 GO annotations based on evolutionary models"/>
</dbReference>
<dbReference type="PhylomeDB" id="P49770"/>
<dbReference type="TreeFam" id="TF101506"/>
<dbReference type="PathwayCommons" id="P49770"/>
<dbReference type="Reactome" id="R-HSA-72731">
    <property type="pathway name" value="Recycling of eIF2:GDP"/>
</dbReference>
<dbReference type="SignaLink" id="P49770"/>
<dbReference type="SIGNOR" id="P49770"/>
<dbReference type="BioGRID-ORCS" id="8892">
    <property type="hits" value="844 hits in 1176 CRISPR screens"/>
</dbReference>
<dbReference type="ChiTaRS" id="EIF2B2">
    <property type="organism name" value="human"/>
</dbReference>
<dbReference type="GeneWiki" id="EIF2B2"/>
<dbReference type="GenomeRNAi" id="8892"/>
<dbReference type="Pharos" id="P49770">
    <property type="development level" value="Tbio"/>
</dbReference>
<dbReference type="PRO" id="PR:P49770"/>
<dbReference type="Proteomes" id="UP000005640">
    <property type="component" value="Chromosome 14"/>
</dbReference>
<dbReference type="RNAct" id="P49770">
    <property type="molecule type" value="protein"/>
</dbReference>
<dbReference type="Bgee" id="ENSG00000119718">
    <property type="expression patterns" value="Expressed in left lobe of thyroid gland and 209 other cell types or tissues"/>
</dbReference>
<dbReference type="ExpressionAtlas" id="P49770">
    <property type="expression patterns" value="baseline and differential"/>
</dbReference>
<dbReference type="GO" id="GO:0005737">
    <property type="term" value="C:cytoplasm"/>
    <property type="evidence" value="ECO:0000314"/>
    <property type="project" value="UniProtKB"/>
</dbReference>
<dbReference type="GO" id="GO:0005829">
    <property type="term" value="C:cytosol"/>
    <property type="evidence" value="ECO:0000304"/>
    <property type="project" value="Reactome"/>
</dbReference>
<dbReference type="GO" id="GO:0005851">
    <property type="term" value="C:eukaryotic translation initiation factor 2B complex"/>
    <property type="evidence" value="ECO:0000314"/>
    <property type="project" value="UniProtKB"/>
</dbReference>
<dbReference type="GO" id="GO:0005524">
    <property type="term" value="F:ATP binding"/>
    <property type="evidence" value="ECO:0000314"/>
    <property type="project" value="UniProtKB"/>
</dbReference>
<dbReference type="GO" id="GO:0005525">
    <property type="term" value="F:GTP binding"/>
    <property type="evidence" value="ECO:0000314"/>
    <property type="project" value="UniProtKB"/>
</dbReference>
<dbReference type="GO" id="GO:0005085">
    <property type="term" value="F:guanyl-nucleotide exchange factor activity"/>
    <property type="evidence" value="ECO:0000314"/>
    <property type="project" value="UniProtKB"/>
</dbReference>
<dbReference type="GO" id="GO:0003743">
    <property type="term" value="F:translation initiation factor activity"/>
    <property type="evidence" value="ECO:0007669"/>
    <property type="project" value="UniProtKB-KW"/>
</dbReference>
<dbReference type="GO" id="GO:0007417">
    <property type="term" value="P:central nervous system development"/>
    <property type="evidence" value="ECO:0000315"/>
    <property type="project" value="UniProtKB"/>
</dbReference>
<dbReference type="GO" id="GO:0002183">
    <property type="term" value="P:cytoplasmic translational initiation"/>
    <property type="evidence" value="ECO:0000314"/>
    <property type="project" value="UniProtKB"/>
</dbReference>
<dbReference type="GO" id="GO:0042552">
    <property type="term" value="P:myelination"/>
    <property type="evidence" value="ECO:0000315"/>
    <property type="project" value="UniProtKB"/>
</dbReference>
<dbReference type="GO" id="GO:0014003">
    <property type="term" value="P:oligodendrocyte development"/>
    <property type="evidence" value="ECO:0000315"/>
    <property type="project" value="UniProtKB"/>
</dbReference>
<dbReference type="GO" id="GO:0001541">
    <property type="term" value="P:ovarian follicle development"/>
    <property type="evidence" value="ECO:0000315"/>
    <property type="project" value="UniProtKB"/>
</dbReference>
<dbReference type="GO" id="GO:0006446">
    <property type="term" value="P:regulation of translational initiation"/>
    <property type="evidence" value="ECO:0000304"/>
    <property type="project" value="UniProtKB"/>
</dbReference>
<dbReference type="GO" id="GO:0009749">
    <property type="term" value="P:response to glucose"/>
    <property type="evidence" value="ECO:0000250"/>
    <property type="project" value="UniProtKB"/>
</dbReference>
<dbReference type="GO" id="GO:0009408">
    <property type="term" value="P:response to heat"/>
    <property type="evidence" value="ECO:0000250"/>
    <property type="project" value="UniProtKB"/>
</dbReference>
<dbReference type="GO" id="GO:0043434">
    <property type="term" value="P:response to peptide hormone"/>
    <property type="evidence" value="ECO:0000250"/>
    <property type="project" value="UniProtKB"/>
</dbReference>
<dbReference type="GO" id="GO:0050852">
    <property type="term" value="P:T cell receptor signaling pathway"/>
    <property type="evidence" value="ECO:0000314"/>
    <property type="project" value="UniProtKB"/>
</dbReference>
<dbReference type="GO" id="GO:0006413">
    <property type="term" value="P:translational initiation"/>
    <property type="evidence" value="ECO:0000314"/>
    <property type="project" value="UniProtKB"/>
</dbReference>
<dbReference type="FunFam" id="3.40.50.10470:FF:000004">
    <property type="entry name" value="Translation initiation factor eIF-2B subunit beta"/>
    <property type="match status" value="1"/>
</dbReference>
<dbReference type="Gene3D" id="3.40.50.10470">
    <property type="entry name" value="Translation initiation factor eif-2b, domain 2"/>
    <property type="match status" value="1"/>
</dbReference>
<dbReference type="InterPro" id="IPR051855">
    <property type="entry name" value="eIF2B_beta_subunit"/>
</dbReference>
<dbReference type="InterPro" id="IPR000649">
    <property type="entry name" value="IF-2B-related"/>
</dbReference>
<dbReference type="InterPro" id="IPR042529">
    <property type="entry name" value="IF_2B-like_C"/>
</dbReference>
<dbReference type="InterPro" id="IPR037171">
    <property type="entry name" value="NagB/RpiA_transferase-like"/>
</dbReference>
<dbReference type="PANTHER" id="PTHR45859">
    <property type="entry name" value="TRANSLATION INITIATION FACTOR EIF-2B SUBUNIT BETA"/>
    <property type="match status" value="1"/>
</dbReference>
<dbReference type="PANTHER" id="PTHR45859:SF1">
    <property type="entry name" value="TRANSLATION INITIATION FACTOR EIF-2B SUBUNIT BETA"/>
    <property type="match status" value="1"/>
</dbReference>
<dbReference type="Pfam" id="PF01008">
    <property type="entry name" value="IF-2B"/>
    <property type="match status" value="1"/>
</dbReference>
<dbReference type="SUPFAM" id="SSF100950">
    <property type="entry name" value="NagB/RpiA/CoA transferase-like"/>
    <property type="match status" value="1"/>
</dbReference>
<name>EI2BB_HUMAN</name>
<comment type="function">
    <text evidence="8 10 11">Acts as a component of the translation initiation factor 2B (eIF2B) complex, which catalyzes the exchange of GDP for GTP on eukaryotic initiation factor 2 (eIF2) gamma subunit (PubMed:25858979, PubMed:27023709, PubMed:31048492). Its guanine nucleotide exchange factor activity is repressed when bound to eIF2 complex phosphorylated on the alpha subunit, thereby limiting the amount of methionyl-initiator methionine tRNA available to the ribosome and consequently global translation is repressed (PubMed:25858979, PubMed:31048492).</text>
</comment>
<comment type="activity regulation">
    <text evidence="8">Activated by the chemical integrated stress response (ISR) inhibitor ISRIB which stimulates guanine nucleotide exchange factor activity for both phosphorylated and unphosphorylated eIF2.</text>
</comment>
<comment type="subunit">
    <text evidence="8 10 11">Component of the translation initiation factor 2B (eIF2B) complex which is a heterodecamer of two sets of five different subunits: alpha, beta, gamma, delta and epsilon. Subunits alpha, beta and delta comprise a regulatory subcomplex and subunits epsilon and gamma comprise a catalytic subcomplex (PubMed:25858979, PubMed:27023709, PubMed:31048492). Within the complex, the hexameric regulatory complex resides at the center, with the two heterodimeric catalytic subcomplexes bound on opposite sides (PubMed:31048492).</text>
</comment>
<comment type="interaction">
    <interactant intactId="EBI-718773">
        <id>P49770</id>
    </interactant>
    <interactant intactId="EBI-2961725">
        <id>Q96LT7</id>
        <label>C9orf72</label>
    </interactant>
    <organismsDiffer>false</organismsDiffer>
    <experiments>6</experiments>
</comment>
<comment type="interaction">
    <interactant intactId="EBI-718773">
        <id>P49770</id>
    </interactant>
    <interactant intactId="EBI-2340132">
        <id>Q9UI10</id>
        <label>EIF2B4</label>
    </interactant>
    <organismsDiffer>false</organismsDiffer>
    <experiments>9</experiments>
</comment>
<comment type="subcellular location">
    <subcellularLocation>
        <location evidence="1">Cytoplasm</location>
        <location evidence="1">Cytosol</location>
    </subcellularLocation>
</comment>
<comment type="disease" evidence="2 3 4 5 6 7">
    <disease id="DI-06648">
        <name>Leukoencephalopathy with vanishing white matter 2</name>
        <acronym>VWM2</acronym>
        <description>An autosomal recessive brain disease characterized by neurological features including progressive cerebellar ataxia, spasticity, and cognitive deficits. Brain imaging shows abnormal white matter that vanishes over time and is replaced by cerebrospinal fluid. Disease severity ranges from fatal infantile forms to adult forms without neurological deterioration. The disease is progressive with, in most individuals, additional episodes of rapid deterioration following febrile infections or minor head trauma. Death may occurs after a variable period after disease onset, usually following an episode of fever and coma. A subset of affected females with milder forms of the disease who survive to adolescence exhibit ovarian dysfunction. This variant of the disorder is called ovarioleukodystrophy.</description>
        <dbReference type="MIM" id="620312"/>
    </disease>
    <text>The disease is caused by variants affecting the gene represented in this entry.</text>
</comment>
<comment type="similarity">
    <text evidence="12">Belongs to the eIF-2B alpha/beta/delta subunits family.</text>
</comment>
<comment type="sequence caution" evidence="12">
    <conflict type="frameshift">
        <sequence resource="EMBL-CDS" id="AAC42002"/>
    </conflict>
</comment>
<comment type="online information" name="Mendelian genes eukaryotic translation initiation factor 2B, subunit 2 beta, 39kDa (EIF2B2)">
    <link uri="https://databases.lovd.nl/shared/genes/EIF2B2"/>
    <text>Leiden Open Variation Database (LOVD)</text>
</comment>
<proteinExistence type="evidence at protein level"/>
<sequence>MPGSAAKGSELSERIESFVETLKRGGGPRSSEEMARETLGLLRQIITDHRWSNAGELMELIRREGRRMTAAQPSETTVGNMVRRVLKIIREEYGRLHGRSDESDQQESLHKLLTSGGLNEDFSFHYAQLQSNIIEAINELLVELEGTMENIAAQALEHIHSNEVIMTIGFSRTVEAFLKEAARKRKFHVIVAECAPFCQGHEMAVNLSKAGIETTVMTDAAIFAVMSRVNKVIIGTKTILANGALRAVTGTHTLALAAKHHSTPLIVCAPMFKLSPQFPNEEDSFHKFVAPEEVLPFTEGDILEKVSVHCPVFDYVPPELITLFISNIGGNAPSYIYRLMSELYHPDDHVL</sequence>
<organism>
    <name type="scientific">Homo sapiens</name>
    <name type="common">Human</name>
    <dbReference type="NCBI Taxonomy" id="9606"/>
    <lineage>
        <taxon>Eukaryota</taxon>
        <taxon>Metazoa</taxon>
        <taxon>Chordata</taxon>
        <taxon>Craniata</taxon>
        <taxon>Vertebrata</taxon>
        <taxon>Euteleostomi</taxon>
        <taxon>Mammalia</taxon>
        <taxon>Eutheria</taxon>
        <taxon>Euarchontoglires</taxon>
        <taxon>Primates</taxon>
        <taxon>Haplorrhini</taxon>
        <taxon>Catarrhini</taxon>
        <taxon>Hominidae</taxon>
        <taxon>Homo</taxon>
    </lineage>
</organism>